<feature type="signal peptide" evidence="2">
    <location>
        <begin position="1"/>
        <end position="24"/>
    </location>
</feature>
<feature type="chain" id="PRO_0000431258" description="Transmembrane 9 superfamily member 1" evidence="2">
    <location>
        <begin position="25"/>
        <end position="589"/>
    </location>
</feature>
<feature type="topological domain" description="Lumenal" evidence="7">
    <location>
        <begin position="25"/>
        <end position="222"/>
    </location>
</feature>
<feature type="transmembrane region" description="Helical; Name=1" evidence="2">
    <location>
        <begin position="223"/>
        <end position="243"/>
    </location>
</feature>
<feature type="topological domain" description="Cytoplasmic" evidence="7">
    <location>
        <begin position="244"/>
        <end position="293"/>
    </location>
</feature>
<feature type="transmembrane region" description="Helical; Name=2" evidence="2">
    <location>
        <begin position="294"/>
        <end position="314"/>
    </location>
</feature>
<feature type="topological domain" description="Lumenal" evidence="7">
    <location>
        <begin position="315"/>
        <end position="321"/>
    </location>
</feature>
<feature type="transmembrane region" description="Helical; Name=3" evidence="2">
    <location>
        <begin position="322"/>
        <end position="342"/>
    </location>
</feature>
<feature type="topological domain" description="Cytoplasmic" evidence="7">
    <location>
        <begin position="343"/>
        <end position="364"/>
    </location>
</feature>
<feature type="transmembrane region" description="Helical; Name=4" evidence="2">
    <location>
        <begin position="365"/>
        <end position="385"/>
    </location>
</feature>
<feature type="topological domain" description="Lumenal" evidence="7">
    <location>
        <begin position="386"/>
        <end position="395"/>
    </location>
</feature>
<feature type="transmembrane region" description="Helical; Name=5" evidence="2">
    <location>
        <begin position="396"/>
        <end position="416"/>
    </location>
</feature>
<feature type="topological domain" description="Cytoplasmic" evidence="7">
    <location>
        <begin position="417"/>
        <end position="448"/>
    </location>
</feature>
<feature type="transmembrane region" description="Helical; Name=6" evidence="2">
    <location>
        <begin position="449"/>
        <end position="469"/>
    </location>
</feature>
<feature type="topological domain" description="Lumenal" evidence="7">
    <location>
        <begin position="470"/>
        <end position="481"/>
    </location>
</feature>
<feature type="transmembrane region" description="Helical; Name=7" evidence="2">
    <location>
        <begin position="482"/>
        <end position="502"/>
    </location>
</feature>
<feature type="topological domain" description="Cytoplasmic" evidence="7">
    <location>
        <begin position="503"/>
        <end position="518"/>
    </location>
</feature>
<feature type="transmembrane region" description="Helical; Name=8" evidence="2">
    <location>
        <begin position="519"/>
        <end position="539"/>
    </location>
</feature>
<feature type="topological domain" description="Lumenal" evidence="7">
    <location>
        <begin position="540"/>
        <end position="550"/>
    </location>
</feature>
<feature type="transmembrane region" description="Helical; Name=9" evidence="2">
    <location>
        <begin position="551"/>
        <end position="571"/>
    </location>
</feature>
<feature type="topological domain" description="Cytoplasmic" evidence="7">
    <location>
        <begin position="572"/>
        <end position="589"/>
    </location>
</feature>
<feature type="short sequence motif" description="Endoplasmic reticulum export signal" evidence="4">
    <location>
        <begin position="578"/>
        <end position="583"/>
    </location>
</feature>
<feature type="short sequence motif" description="Golgi retention signal" evidence="4">
    <location>
        <begin position="587"/>
        <end position="589"/>
    </location>
</feature>
<feature type="mutagenesis site" description="Abolishes export from endoplasmic reticulum; when associated with Ala-583." evidence="4">
    <original>FV</original>
    <variation>AA</variation>
    <location>
        <begin position="578"/>
        <end position="579"/>
    </location>
</feature>
<feature type="mutagenesis site" description="Abolishes export from endoplasmic reticulum; when associated with Ala-578-579-Ala." evidence="4">
    <original>Y</original>
    <variation>A</variation>
    <location>
        <position position="583"/>
    </location>
</feature>
<feature type="mutagenesis site" description="Abolishes Golgi retention." evidence="4">
    <original>KCD</original>
    <variation>ACA</variation>
    <location>
        <begin position="587"/>
        <end position="589"/>
    </location>
</feature>
<feature type="mutagenesis site" description="Abolishes Golgi retention." evidence="4">
    <original>K</original>
    <variation>A</variation>
    <location>
        <position position="587"/>
    </location>
</feature>
<feature type="mutagenesis site" description="Abolishes Golgi retention." evidence="4">
    <original>D</original>
    <variation>A</variation>
    <location>
        <position position="589"/>
    </location>
</feature>
<accession>Q940G0</accession>
<accession>O04091</accession>
<accession>Q0WMB1</accession>
<protein>
    <recommendedName>
        <fullName evidence="7">Transmembrane 9 superfamily member 1</fullName>
    </recommendedName>
    <alternativeName>
        <fullName evidence="6">Endomembrane protein 12</fullName>
    </alternativeName>
    <alternativeName>
        <fullName evidence="5">Transmembrane nine protein 1</fullName>
        <shortName evidence="5">AtTMN1</shortName>
    </alternativeName>
</protein>
<evidence type="ECO:0000250" key="1">
    <source>
        <dbReference type="UniProtKB" id="P32802"/>
    </source>
</evidence>
<evidence type="ECO:0000255" key="2"/>
<evidence type="ECO:0000269" key="3">
    <source>
    </source>
</evidence>
<evidence type="ECO:0000269" key="4">
    <source>
    </source>
</evidence>
<evidence type="ECO:0000303" key="5">
    <source>
    </source>
</evidence>
<evidence type="ECO:0000303" key="6">
    <source>
    </source>
</evidence>
<evidence type="ECO:0000305" key="7"/>
<evidence type="ECO:0000312" key="8">
    <source>
        <dbReference type="Araport" id="AT1G10950"/>
    </source>
</evidence>
<evidence type="ECO:0000312" key="9">
    <source>
        <dbReference type="EMBL" id="AAB65482.1"/>
    </source>
</evidence>
<evidence type="ECO:0000312" key="10">
    <source>
        <dbReference type="EMBL" id="AAK96857.1"/>
    </source>
</evidence>
<reference key="1">
    <citation type="journal article" date="2000" name="Nature">
        <title>Sequence and analysis of chromosome 1 of the plant Arabidopsis thaliana.</title>
        <authorList>
            <person name="Theologis A."/>
            <person name="Ecker J.R."/>
            <person name="Palm C.J."/>
            <person name="Federspiel N.A."/>
            <person name="Kaul S."/>
            <person name="White O."/>
            <person name="Alonso J."/>
            <person name="Altafi H."/>
            <person name="Araujo R."/>
            <person name="Bowman C.L."/>
            <person name="Brooks S.Y."/>
            <person name="Buehler E."/>
            <person name="Chan A."/>
            <person name="Chao Q."/>
            <person name="Chen H."/>
            <person name="Cheuk R.F."/>
            <person name="Chin C.W."/>
            <person name="Chung M.K."/>
            <person name="Conn L."/>
            <person name="Conway A.B."/>
            <person name="Conway A.R."/>
            <person name="Creasy T.H."/>
            <person name="Dewar K."/>
            <person name="Dunn P."/>
            <person name="Etgu P."/>
            <person name="Feldblyum T.V."/>
            <person name="Feng J.-D."/>
            <person name="Fong B."/>
            <person name="Fujii C.Y."/>
            <person name="Gill J.E."/>
            <person name="Goldsmith A.D."/>
            <person name="Haas B."/>
            <person name="Hansen N.F."/>
            <person name="Hughes B."/>
            <person name="Huizar L."/>
            <person name="Hunter J.L."/>
            <person name="Jenkins J."/>
            <person name="Johnson-Hopson C."/>
            <person name="Khan S."/>
            <person name="Khaykin E."/>
            <person name="Kim C.J."/>
            <person name="Koo H.L."/>
            <person name="Kremenetskaia I."/>
            <person name="Kurtz D.B."/>
            <person name="Kwan A."/>
            <person name="Lam B."/>
            <person name="Langin-Hooper S."/>
            <person name="Lee A."/>
            <person name="Lee J.M."/>
            <person name="Lenz C.A."/>
            <person name="Li J.H."/>
            <person name="Li Y.-P."/>
            <person name="Lin X."/>
            <person name="Liu S.X."/>
            <person name="Liu Z.A."/>
            <person name="Luros J.S."/>
            <person name="Maiti R."/>
            <person name="Marziali A."/>
            <person name="Militscher J."/>
            <person name="Miranda M."/>
            <person name="Nguyen M."/>
            <person name="Nierman W.C."/>
            <person name="Osborne B.I."/>
            <person name="Pai G."/>
            <person name="Peterson J."/>
            <person name="Pham P.K."/>
            <person name="Rizzo M."/>
            <person name="Rooney T."/>
            <person name="Rowley D."/>
            <person name="Sakano H."/>
            <person name="Salzberg S.L."/>
            <person name="Schwartz J.R."/>
            <person name="Shinn P."/>
            <person name="Southwick A.M."/>
            <person name="Sun H."/>
            <person name="Tallon L.J."/>
            <person name="Tambunga G."/>
            <person name="Toriumi M.J."/>
            <person name="Town C.D."/>
            <person name="Utterback T."/>
            <person name="Van Aken S."/>
            <person name="Vaysberg M."/>
            <person name="Vysotskaia V.S."/>
            <person name="Walker M."/>
            <person name="Wu D."/>
            <person name="Yu G."/>
            <person name="Fraser C.M."/>
            <person name="Venter J.C."/>
            <person name="Davis R.W."/>
        </authorList>
    </citation>
    <scope>NUCLEOTIDE SEQUENCE [LARGE SCALE GENOMIC DNA]</scope>
    <source>
        <strain>cv. Columbia</strain>
    </source>
</reference>
<reference key="2">
    <citation type="journal article" date="2017" name="Plant J.">
        <title>Araport11: a complete reannotation of the Arabidopsis thaliana reference genome.</title>
        <authorList>
            <person name="Cheng C.Y."/>
            <person name="Krishnakumar V."/>
            <person name="Chan A.P."/>
            <person name="Thibaud-Nissen F."/>
            <person name="Schobel S."/>
            <person name="Town C.D."/>
        </authorList>
    </citation>
    <scope>GENOME REANNOTATION</scope>
    <source>
        <strain>cv. Columbia</strain>
    </source>
</reference>
<reference key="3">
    <citation type="journal article" date="2003" name="Science">
        <title>Empirical analysis of transcriptional activity in the Arabidopsis genome.</title>
        <authorList>
            <person name="Yamada K."/>
            <person name="Lim J."/>
            <person name="Dale J.M."/>
            <person name="Chen H."/>
            <person name="Shinn P."/>
            <person name="Palm C.J."/>
            <person name="Southwick A.M."/>
            <person name="Wu H.C."/>
            <person name="Kim C.J."/>
            <person name="Nguyen M."/>
            <person name="Pham P.K."/>
            <person name="Cheuk R.F."/>
            <person name="Karlin-Newmann G."/>
            <person name="Liu S.X."/>
            <person name="Lam B."/>
            <person name="Sakano H."/>
            <person name="Wu T."/>
            <person name="Yu G."/>
            <person name="Miranda M."/>
            <person name="Quach H.L."/>
            <person name="Tripp M."/>
            <person name="Chang C.H."/>
            <person name="Lee J.M."/>
            <person name="Toriumi M.J."/>
            <person name="Chan M.M."/>
            <person name="Tang C.C."/>
            <person name="Onodera C.S."/>
            <person name="Deng J.M."/>
            <person name="Akiyama K."/>
            <person name="Ansari Y."/>
            <person name="Arakawa T."/>
            <person name="Banh J."/>
            <person name="Banno F."/>
            <person name="Bowser L."/>
            <person name="Brooks S.Y."/>
            <person name="Carninci P."/>
            <person name="Chao Q."/>
            <person name="Choy N."/>
            <person name="Enju A."/>
            <person name="Goldsmith A.D."/>
            <person name="Gurjal M."/>
            <person name="Hansen N.F."/>
            <person name="Hayashizaki Y."/>
            <person name="Johnson-Hopson C."/>
            <person name="Hsuan V.W."/>
            <person name="Iida K."/>
            <person name="Karnes M."/>
            <person name="Khan S."/>
            <person name="Koesema E."/>
            <person name="Ishida J."/>
            <person name="Jiang P.X."/>
            <person name="Jones T."/>
            <person name="Kawai J."/>
            <person name="Kamiya A."/>
            <person name="Meyers C."/>
            <person name="Nakajima M."/>
            <person name="Narusaka M."/>
            <person name="Seki M."/>
            <person name="Sakurai T."/>
            <person name="Satou M."/>
            <person name="Tamse R."/>
            <person name="Vaysberg M."/>
            <person name="Wallender E.K."/>
            <person name="Wong C."/>
            <person name="Yamamura Y."/>
            <person name="Yuan S."/>
            <person name="Shinozaki K."/>
            <person name="Davis R.W."/>
            <person name="Theologis A."/>
            <person name="Ecker J.R."/>
        </authorList>
    </citation>
    <scope>NUCLEOTIDE SEQUENCE [LARGE SCALE MRNA]</scope>
    <source>
        <strain>cv. Columbia</strain>
    </source>
</reference>
<reference key="4">
    <citation type="submission" date="2006-07" db="EMBL/GenBank/DDBJ databases">
        <title>Large-scale analysis of RIKEN Arabidopsis full-length (RAFL) cDNAs.</title>
        <authorList>
            <person name="Totoki Y."/>
            <person name="Seki M."/>
            <person name="Ishida J."/>
            <person name="Nakajima M."/>
            <person name="Enju A."/>
            <person name="Kamiya A."/>
            <person name="Narusaka M."/>
            <person name="Shin-i T."/>
            <person name="Nakagawa M."/>
            <person name="Sakamoto N."/>
            <person name="Oishi K."/>
            <person name="Kohara Y."/>
            <person name="Kobayashi M."/>
            <person name="Toyoda A."/>
            <person name="Sakaki Y."/>
            <person name="Sakurai T."/>
            <person name="Iida K."/>
            <person name="Akiyama K."/>
            <person name="Satou M."/>
            <person name="Toyoda T."/>
            <person name="Konagaya A."/>
            <person name="Carninci P."/>
            <person name="Kawai J."/>
            <person name="Hayashizaki Y."/>
            <person name="Shinozaki K."/>
        </authorList>
    </citation>
    <scope>NUCLEOTIDE SEQUENCE [LARGE SCALE MRNA] OF 454-589</scope>
    <source>
        <strain>cv. Columbia</strain>
    </source>
</reference>
<reference key="5">
    <citation type="journal article" date="2010" name="Physiol. Plantarum">
        <title>Transmembrane nine proteins in yeast and Arabidopsis affect cellular metal contents without changing vacuolar morphology.</title>
        <authorList>
            <person name="Hegelund J.N."/>
            <person name="Jahn T.P."/>
            <person name="Baekgaard L."/>
            <person name="Palmgren M.G."/>
            <person name="Schjoerring J.K."/>
        </authorList>
    </citation>
    <scope>GENE FAMILY</scope>
    <scope>NOMENCLATURE</scope>
    <scope>TISSUE SPECIFICITY</scope>
</reference>
<reference key="6">
    <citation type="journal article" date="2012" name="Plant Cell">
        <title>The Golgi-localized Arabidopsis endomembrane protein12 contains both endoplasmic reticulum export and Golgi retention signals at its C terminus.</title>
        <authorList>
            <person name="Gao C."/>
            <person name="Yu C.K."/>
            <person name="Qu S."/>
            <person name="San M.W."/>
            <person name="Li K.Y."/>
            <person name="Lo S.W."/>
            <person name="Jiang L."/>
        </authorList>
    </citation>
    <scope>GENE FAMILY</scope>
    <scope>NOMENCLATURE</scope>
    <scope>SUBCELLULAR LOCATION</scope>
    <scope>MOTIF</scope>
    <scope>MUTAGENESIS OF 578-PHE-VAL-579; TYR-583; LYS-587 AND ASP-589</scope>
</reference>
<sequence length="589" mass="66893">MPSSSSAAVLVFLLLVSLLTPTFASDSDHKYQAEEQVTLWVNKVGPYNNPQETYNYYSLPFCRPSGNNVHKWGGLGEVLGGNELIDSEIAIKFMKNVERSVICPLELDEAKVKHFKDAIESSYWFEFFMDDLPLWGFVGELHPDKNSENGKHVLYTHKNIVVKYNKDQIIHVNLTQDNPRPLEAGKKMDLTYSVQWIPTNVTFARRFDVYLDYPFFEHQIHWFSIFNSFMMVIFLTGLVSMILMRTLRNDYAKYAREDDDLESLERDVSEESGWKLVHGDVFRPASSLVLLSAVVGTGAQLALLVLLVILMAIVGTLYVGRGAIVTTFIVCYALTSFVSGYVSGGMYSRSGGKHWIKCMVLTASLFPFLCFGIGFLLNTIAIFYGSLAAIPFGTMVVVFVIWGFISFPLALLGTVVGRNWSGAPNNPCRVKTIPRPIPEKKWYLTPSVVSLMGGLLPFGSIFIEMYFVFTSFWNYKVYYVYGFMLLVFVILVIVTVCVTIVGTYFLLNAENYHWQWTSFFSAASTAVYVYLYSIYYYYVKTKMSGFFQTSFYFGYTMMFCLGLGILCGAVGYLGSNLFVRRIYRNIKCD</sequence>
<gene>
    <name evidence="5" type="primary">TMN1</name>
    <name evidence="6" type="synonym">EMP12</name>
    <name evidence="8" type="ordered locus">At1g10950</name>
    <name evidence="9" type="ORF">T19D16.13</name>
</gene>
<dbReference type="EMBL" id="U95973">
    <property type="protein sequence ID" value="AAB65482.1"/>
    <property type="status" value="ALT_SEQ"/>
    <property type="molecule type" value="Genomic_DNA"/>
</dbReference>
<dbReference type="EMBL" id="CP002684">
    <property type="protein sequence ID" value="AEE28668.1"/>
    <property type="molecule type" value="Genomic_DNA"/>
</dbReference>
<dbReference type="EMBL" id="AF446365">
    <property type="protein sequence ID" value="AAL48237.1"/>
    <property type="molecule type" value="mRNA"/>
</dbReference>
<dbReference type="EMBL" id="AY054666">
    <property type="protein sequence ID" value="AAK96857.1"/>
    <property type="molecule type" value="mRNA"/>
</dbReference>
<dbReference type="EMBL" id="AY063907">
    <property type="protein sequence ID" value="AAL36263.1"/>
    <property type="molecule type" value="mRNA"/>
</dbReference>
<dbReference type="EMBL" id="AY081536">
    <property type="protein sequence ID" value="AAM10098.1"/>
    <property type="molecule type" value="mRNA"/>
</dbReference>
<dbReference type="EMBL" id="BT008600">
    <property type="protein sequence ID" value="AAP40425.1"/>
    <property type="molecule type" value="mRNA"/>
</dbReference>
<dbReference type="EMBL" id="AK229917">
    <property type="protein sequence ID" value="BAF01745.1"/>
    <property type="molecule type" value="mRNA"/>
</dbReference>
<dbReference type="PIR" id="D86243">
    <property type="entry name" value="D86243"/>
</dbReference>
<dbReference type="RefSeq" id="NP_563881.1">
    <property type="nucleotide sequence ID" value="NM_100970.4"/>
</dbReference>
<dbReference type="SMR" id="Q940G0"/>
<dbReference type="BioGRID" id="22878">
    <property type="interactions" value="1"/>
</dbReference>
<dbReference type="FunCoup" id="Q940G0">
    <property type="interactions" value="4784"/>
</dbReference>
<dbReference type="STRING" id="3702.Q940G0"/>
<dbReference type="TCDB" id="8.A.68.1.7">
    <property type="family name" value="the endomembrane protein-70 (emp70) family"/>
</dbReference>
<dbReference type="iPTMnet" id="Q940G0"/>
<dbReference type="PaxDb" id="3702-AT1G10950.1"/>
<dbReference type="ProteomicsDB" id="234440"/>
<dbReference type="EnsemblPlants" id="AT1G10950.1">
    <property type="protein sequence ID" value="AT1G10950.1"/>
    <property type="gene ID" value="AT1G10950"/>
</dbReference>
<dbReference type="GeneID" id="837638"/>
<dbReference type="Gramene" id="AT1G10950.1">
    <property type="protein sequence ID" value="AT1G10950.1"/>
    <property type="gene ID" value="AT1G10950"/>
</dbReference>
<dbReference type="KEGG" id="ath:AT1G10950"/>
<dbReference type="Araport" id="AT1G10950"/>
<dbReference type="TAIR" id="AT1G10950">
    <property type="gene designation" value="TMN1"/>
</dbReference>
<dbReference type="eggNOG" id="KOG1277">
    <property type="taxonomic scope" value="Eukaryota"/>
</dbReference>
<dbReference type="HOGENOM" id="CLU_010714_0_2_1"/>
<dbReference type="InParanoid" id="Q940G0"/>
<dbReference type="OMA" id="DAPCRVN"/>
<dbReference type="PhylomeDB" id="Q940G0"/>
<dbReference type="PRO" id="PR:Q940G0"/>
<dbReference type="Proteomes" id="UP000006548">
    <property type="component" value="Chromosome 1"/>
</dbReference>
<dbReference type="ExpressionAtlas" id="Q940G0">
    <property type="expression patterns" value="baseline and differential"/>
</dbReference>
<dbReference type="GO" id="GO:0005801">
    <property type="term" value="C:cis-Golgi network"/>
    <property type="evidence" value="ECO:0000314"/>
    <property type="project" value="TAIR"/>
</dbReference>
<dbReference type="GO" id="GO:0005768">
    <property type="term" value="C:endosome"/>
    <property type="evidence" value="ECO:0007005"/>
    <property type="project" value="TAIR"/>
</dbReference>
<dbReference type="GO" id="GO:0010008">
    <property type="term" value="C:endosome membrane"/>
    <property type="evidence" value="ECO:0007669"/>
    <property type="project" value="UniProtKB-SubCell"/>
</dbReference>
<dbReference type="GO" id="GO:0005576">
    <property type="term" value="C:extracellular region"/>
    <property type="evidence" value="ECO:0007005"/>
    <property type="project" value="TAIR"/>
</dbReference>
<dbReference type="GO" id="GO:0005794">
    <property type="term" value="C:Golgi apparatus"/>
    <property type="evidence" value="ECO:0007005"/>
    <property type="project" value="TAIR"/>
</dbReference>
<dbReference type="GO" id="GO:0000137">
    <property type="term" value="C:Golgi cis cisterna"/>
    <property type="evidence" value="ECO:0007005"/>
    <property type="project" value="TAIR"/>
</dbReference>
<dbReference type="GO" id="GO:0005797">
    <property type="term" value="C:Golgi medial cisterna"/>
    <property type="evidence" value="ECO:0000314"/>
    <property type="project" value="TAIR"/>
</dbReference>
<dbReference type="GO" id="GO:0000139">
    <property type="term" value="C:Golgi membrane"/>
    <property type="evidence" value="ECO:0007669"/>
    <property type="project" value="UniProtKB-SubCell"/>
</dbReference>
<dbReference type="GO" id="GO:0005802">
    <property type="term" value="C:trans-Golgi network"/>
    <property type="evidence" value="ECO:0007005"/>
    <property type="project" value="TAIR"/>
</dbReference>
<dbReference type="InterPro" id="IPR004240">
    <property type="entry name" value="EMP70"/>
</dbReference>
<dbReference type="PANTHER" id="PTHR10766:SF41">
    <property type="entry name" value="TRANSMEMBRANE 9 SUPERFAMILY MEMBER 3"/>
    <property type="match status" value="1"/>
</dbReference>
<dbReference type="PANTHER" id="PTHR10766">
    <property type="entry name" value="TRANSMEMBRANE 9 SUPERFAMILY PROTEIN"/>
    <property type="match status" value="1"/>
</dbReference>
<dbReference type="Pfam" id="PF02990">
    <property type="entry name" value="EMP70"/>
    <property type="match status" value="1"/>
</dbReference>
<keyword id="KW-0967">Endosome</keyword>
<keyword id="KW-0333">Golgi apparatus</keyword>
<keyword id="KW-0472">Membrane</keyword>
<keyword id="KW-1185">Reference proteome</keyword>
<keyword id="KW-0732">Signal</keyword>
<keyword id="KW-0812">Transmembrane</keyword>
<keyword id="KW-1133">Transmembrane helix</keyword>
<comment type="subcellular location">
    <subcellularLocation>
        <location evidence="1">Endosome membrane</location>
        <topology evidence="2">Multi-pass membrane protein</topology>
    </subcellularLocation>
    <subcellularLocation>
        <location evidence="4">Golgi apparatus membrane</location>
        <topology evidence="2">Multi-pass membrane protein</topology>
    </subcellularLocation>
</comment>
<comment type="tissue specificity">
    <text evidence="3">Ubiquitous.</text>
</comment>
<comment type="domain">
    <text evidence="4">The C-terminal KXD/E motif functions as a Golgi retention signal, certainly through the binding to the COP1 coatomer.</text>
</comment>
<comment type="similarity">
    <text>Belongs to the nonaspanin (TM9SF) (TC 9.A.2) family.</text>
</comment>
<comment type="sequence caution" evidence="7">
    <conflict type="erroneous gene model prediction">
        <sequence resource="EMBL-CDS" id="AAB65482"/>
    </conflict>
</comment>
<name>TMN1_ARATH</name>
<organism evidence="10">
    <name type="scientific">Arabidopsis thaliana</name>
    <name type="common">Mouse-ear cress</name>
    <dbReference type="NCBI Taxonomy" id="3702"/>
    <lineage>
        <taxon>Eukaryota</taxon>
        <taxon>Viridiplantae</taxon>
        <taxon>Streptophyta</taxon>
        <taxon>Embryophyta</taxon>
        <taxon>Tracheophyta</taxon>
        <taxon>Spermatophyta</taxon>
        <taxon>Magnoliopsida</taxon>
        <taxon>eudicotyledons</taxon>
        <taxon>Gunneridae</taxon>
        <taxon>Pentapetalae</taxon>
        <taxon>rosids</taxon>
        <taxon>malvids</taxon>
        <taxon>Brassicales</taxon>
        <taxon>Brassicaceae</taxon>
        <taxon>Camelineae</taxon>
        <taxon>Arabidopsis</taxon>
    </lineage>
</organism>
<proteinExistence type="evidence at protein level"/>